<keyword id="KW-0961">Cell wall biogenesis/degradation</keyword>
<keyword id="KW-0963">Cytoplasm</keyword>
<keyword id="KW-0596">Phosphopantetheine</keyword>
<keyword id="KW-0597">Phosphoprotein</keyword>
<dbReference type="EMBL" id="CP000255">
    <property type="protein sequence ID" value="ABD20609.1"/>
    <property type="molecule type" value="Genomic_DNA"/>
</dbReference>
<dbReference type="RefSeq" id="WP_000395692.1">
    <property type="nucleotide sequence ID" value="NZ_CP027476.1"/>
</dbReference>
<dbReference type="SMR" id="Q2FIE1"/>
<dbReference type="GeneID" id="98345253"/>
<dbReference type="KEGG" id="saa:SAUSA300_0837"/>
<dbReference type="HOGENOM" id="CLU_108696_19_0_9"/>
<dbReference type="OMA" id="ISDQMDD"/>
<dbReference type="UniPathway" id="UPA00556"/>
<dbReference type="Proteomes" id="UP000001939">
    <property type="component" value="Chromosome"/>
</dbReference>
<dbReference type="GO" id="GO:0005737">
    <property type="term" value="C:cytoplasm"/>
    <property type="evidence" value="ECO:0007669"/>
    <property type="project" value="UniProtKB-SubCell"/>
</dbReference>
<dbReference type="GO" id="GO:0036370">
    <property type="term" value="F:D-alanyl carrier activity"/>
    <property type="evidence" value="ECO:0007669"/>
    <property type="project" value="UniProtKB-UniRule"/>
</dbReference>
<dbReference type="GO" id="GO:0071555">
    <property type="term" value="P:cell wall organization"/>
    <property type="evidence" value="ECO:0007669"/>
    <property type="project" value="UniProtKB-KW"/>
</dbReference>
<dbReference type="GO" id="GO:0070395">
    <property type="term" value="P:lipoteichoic acid biosynthetic process"/>
    <property type="evidence" value="ECO:0007669"/>
    <property type="project" value="UniProtKB-UniRule"/>
</dbReference>
<dbReference type="Gene3D" id="1.10.1200.10">
    <property type="entry name" value="ACP-like"/>
    <property type="match status" value="1"/>
</dbReference>
<dbReference type="HAMAP" id="MF_00565">
    <property type="entry name" value="DltC"/>
    <property type="match status" value="1"/>
</dbReference>
<dbReference type="InterPro" id="IPR036736">
    <property type="entry name" value="ACP-like_sf"/>
</dbReference>
<dbReference type="InterPro" id="IPR003230">
    <property type="entry name" value="DltC"/>
</dbReference>
<dbReference type="InterPro" id="IPR009081">
    <property type="entry name" value="PP-bd_ACP"/>
</dbReference>
<dbReference type="NCBIfam" id="TIGR01688">
    <property type="entry name" value="dltC"/>
    <property type="match status" value="1"/>
</dbReference>
<dbReference type="NCBIfam" id="NF003464">
    <property type="entry name" value="PRK05087.1"/>
    <property type="match status" value="1"/>
</dbReference>
<dbReference type="Pfam" id="PF00550">
    <property type="entry name" value="PP-binding"/>
    <property type="match status" value="1"/>
</dbReference>
<dbReference type="SUPFAM" id="SSF47336">
    <property type="entry name" value="ACP-like"/>
    <property type="match status" value="1"/>
</dbReference>
<dbReference type="PROSITE" id="PS50075">
    <property type="entry name" value="CARRIER"/>
    <property type="match status" value="1"/>
</dbReference>
<reference key="1">
    <citation type="journal article" date="2006" name="Lancet">
        <title>Complete genome sequence of USA300, an epidemic clone of community-acquired meticillin-resistant Staphylococcus aureus.</title>
        <authorList>
            <person name="Diep B.A."/>
            <person name="Gill S.R."/>
            <person name="Chang R.F."/>
            <person name="Phan T.H."/>
            <person name="Chen J.H."/>
            <person name="Davidson M.G."/>
            <person name="Lin F."/>
            <person name="Lin J."/>
            <person name="Carleton H.A."/>
            <person name="Mongodin E.F."/>
            <person name="Sensabaugh G.F."/>
            <person name="Perdreau-Remington F."/>
        </authorList>
    </citation>
    <scope>NUCLEOTIDE SEQUENCE [LARGE SCALE GENOMIC DNA]</scope>
    <source>
        <strain>USA300</strain>
    </source>
</reference>
<feature type="chain" id="PRO_1000024924" description="D-alanyl carrier protein">
    <location>
        <begin position="1"/>
        <end position="78"/>
    </location>
</feature>
<feature type="domain" description="Carrier" evidence="1">
    <location>
        <begin position="1"/>
        <end position="78"/>
    </location>
</feature>
<feature type="modified residue" description="O-(pantetheine 4'-phosphoryl)serine" evidence="1">
    <location>
        <position position="36"/>
    </location>
</feature>
<gene>
    <name evidence="1" type="primary">dltC</name>
    <name type="ordered locus">SAUSA300_0837</name>
</gene>
<name>DLTC_STAA3</name>
<protein>
    <recommendedName>
        <fullName evidence="1">D-alanyl carrier protein</fullName>
        <shortName evidence="1">DCP</shortName>
    </recommendedName>
    <alternativeName>
        <fullName evidence="1">D-alanine--poly(phosphoribitol) ligase subunit 2</fullName>
    </alternativeName>
</protein>
<accession>Q2FIE1</accession>
<organism>
    <name type="scientific">Staphylococcus aureus (strain USA300)</name>
    <dbReference type="NCBI Taxonomy" id="367830"/>
    <lineage>
        <taxon>Bacteria</taxon>
        <taxon>Bacillati</taxon>
        <taxon>Bacillota</taxon>
        <taxon>Bacilli</taxon>
        <taxon>Bacillales</taxon>
        <taxon>Staphylococcaceae</taxon>
        <taxon>Staphylococcus</taxon>
    </lineage>
</organism>
<comment type="function">
    <text evidence="1">Carrier protein involved in the D-alanylation of lipoteichoic acid (LTA). The loading of thioester-linked D-alanine onto DltC is catalyzed by D-alanine--D-alanyl carrier protein ligase DltA. The DltC-carried D-alanyl group is further transferred to cell membrane phosphatidylglycerol (PG) by forming an ester bond, probably catalyzed by DltD. D-alanylation of LTA plays an important role in modulating the properties of the cell wall in Gram-positive bacteria, influencing the net charge of the cell wall.</text>
</comment>
<comment type="pathway">
    <text evidence="1">Cell wall biogenesis; lipoteichoic acid biosynthesis.</text>
</comment>
<comment type="subcellular location">
    <subcellularLocation>
        <location evidence="1">Cytoplasm</location>
    </subcellularLocation>
</comment>
<comment type="PTM">
    <text evidence="1">4'-phosphopantetheine is transferred from CoA to a specific serine of apo-DCP.</text>
</comment>
<comment type="similarity">
    <text evidence="1">Belongs to the DltC family.</text>
</comment>
<evidence type="ECO:0000255" key="1">
    <source>
        <dbReference type="HAMAP-Rule" id="MF_00565"/>
    </source>
</evidence>
<sequence>MEFREQVLNLLAEVAENDIVKENPDVEIFEEGIIDSFQTVGLLLEIQNKLDIEVSIMDFDRDEWATPNKIVEALEELR</sequence>
<proteinExistence type="inferred from homology"/>